<protein>
    <recommendedName>
        <fullName evidence="1">Thiamine-monophosphate kinase</fullName>
        <shortName evidence="1">TMP kinase</shortName>
        <shortName evidence="1">Thiamine-phosphate kinase</shortName>
        <ecNumber evidence="1">2.7.4.16</ecNumber>
    </recommendedName>
</protein>
<evidence type="ECO:0000255" key="1">
    <source>
        <dbReference type="HAMAP-Rule" id="MF_02128"/>
    </source>
</evidence>
<evidence type="ECO:0000305" key="2"/>
<dbReference type="EC" id="2.7.4.16" evidence="1"/>
<dbReference type="EMBL" id="BA000036">
    <property type="protein sequence ID" value="BAB98716.1"/>
    <property type="molecule type" value="Genomic_DNA"/>
</dbReference>
<dbReference type="EMBL" id="BX927151">
    <property type="protein sequence ID" value="CAF20021.1"/>
    <property type="status" value="ALT_INIT"/>
    <property type="molecule type" value="Genomic_DNA"/>
</dbReference>
<dbReference type="RefSeq" id="NP_600543.1">
    <property type="nucleotide sequence ID" value="NC_003450.3"/>
</dbReference>
<dbReference type="SMR" id="Q8NQV0"/>
<dbReference type="STRING" id="196627.cg1495"/>
<dbReference type="KEGG" id="cgb:cg1495"/>
<dbReference type="KEGG" id="cgl:Cgl1323"/>
<dbReference type="PATRIC" id="fig|196627.13.peg.1293"/>
<dbReference type="eggNOG" id="COG0611">
    <property type="taxonomic scope" value="Bacteria"/>
</dbReference>
<dbReference type="HOGENOM" id="CLU_046964_0_0_11"/>
<dbReference type="OrthoDB" id="9802811at2"/>
<dbReference type="BioCyc" id="CORYNE:G18NG-10901-MONOMER"/>
<dbReference type="UniPathway" id="UPA00060">
    <property type="reaction ID" value="UER00142"/>
</dbReference>
<dbReference type="Proteomes" id="UP000000582">
    <property type="component" value="Chromosome"/>
</dbReference>
<dbReference type="Proteomes" id="UP000001009">
    <property type="component" value="Chromosome"/>
</dbReference>
<dbReference type="GO" id="GO:0005524">
    <property type="term" value="F:ATP binding"/>
    <property type="evidence" value="ECO:0007669"/>
    <property type="project" value="UniProtKB-UniRule"/>
</dbReference>
<dbReference type="GO" id="GO:0000287">
    <property type="term" value="F:magnesium ion binding"/>
    <property type="evidence" value="ECO:0007669"/>
    <property type="project" value="UniProtKB-UniRule"/>
</dbReference>
<dbReference type="GO" id="GO:0009030">
    <property type="term" value="F:thiamine-phosphate kinase activity"/>
    <property type="evidence" value="ECO:0007669"/>
    <property type="project" value="UniProtKB-UniRule"/>
</dbReference>
<dbReference type="GO" id="GO:0009228">
    <property type="term" value="P:thiamine biosynthetic process"/>
    <property type="evidence" value="ECO:0007669"/>
    <property type="project" value="UniProtKB-KW"/>
</dbReference>
<dbReference type="GO" id="GO:0009229">
    <property type="term" value="P:thiamine diphosphate biosynthetic process"/>
    <property type="evidence" value="ECO:0007669"/>
    <property type="project" value="UniProtKB-UniRule"/>
</dbReference>
<dbReference type="CDD" id="cd02194">
    <property type="entry name" value="ThiL"/>
    <property type="match status" value="1"/>
</dbReference>
<dbReference type="Gene3D" id="3.90.650.10">
    <property type="entry name" value="PurM-like C-terminal domain"/>
    <property type="match status" value="1"/>
</dbReference>
<dbReference type="Gene3D" id="3.30.1330.10">
    <property type="entry name" value="PurM-like, N-terminal domain"/>
    <property type="match status" value="1"/>
</dbReference>
<dbReference type="HAMAP" id="MF_02128">
    <property type="entry name" value="TMP_kinase"/>
    <property type="match status" value="1"/>
</dbReference>
<dbReference type="InterPro" id="IPR010918">
    <property type="entry name" value="PurM-like_C_dom"/>
</dbReference>
<dbReference type="InterPro" id="IPR036676">
    <property type="entry name" value="PurM-like_C_sf"/>
</dbReference>
<dbReference type="InterPro" id="IPR016188">
    <property type="entry name" value="PurM-like_N"/>
</dbReference>
<dbReference type="InterPro" id="IPR036921">
    <property type="entry name" value="PurM-like_N_sf"/>
</dbReference>
<dbReference type="InterPro" id="IPR006283">
    <property type="entry name" value="ThiL-like"/>
</dbReference>
<dbReference type="NCBIfam" id="NF004351">
    <property type="entry name" value="PRK05731.1-4"/>
    <property type="match status" value="1"/>
</dbReference>
<dbReference type="NCBIfam" id="TIGR01379">
    <property type="entry name" value="thiL"/>
    <property type="match status" value="1"/>
</dbReference>
<dbReference type="PANTHER" id="PTHR30270">
    <property type="entry name" value="THIAMINE-MONOPHOSPHATE KINASE"/>
    <property type="match status" value="1"/>
</dbReference>
<dbReference type="PANTHER" id="PTHR30270:SF0">
    <property type="entry name" value="THIAMINE-MONOPHOSPHATE KINASE"/>
    <property type="match status" value="1"/>
</dbReference>
<dbReference type="Pfam" id="PF00586">
    <property type="entry name" value="AIRS"/>
    <property type="match status" value="1"/>
</dbReference>
<dbReference type="Pfam" id="PF02769">
    <property type="entry name" value="AIRS_C"/>
    <property type="match status" value="1"/>
</dbReference>
<dbReference type="PIRSF" id="PIRSF005303">
    <property type="entry name" value="Thiam_monoph_kin"/>
    <property type="match status" value="1"/>
</dbReference>
<dbReference type="SUPFAM" id="SSF56042">
    <property type="entry name" value="PurM C-terminal domain-like"/>
    <property type="match status" value="1"/>
</dbReference>
<dbReference type="SUPFAM" id="SSF55326">
    <property type="entry name" value="PurM N-terminal domain-like"/>
    <property type="match status" value="1"/>
</dbReference>
<name>THIL_CORGL</name>
<comment type="function">
    <text evidence="1">Catalyzes the ATP-dependent phosphorylation of thiamine-monophosphate (TMP) to form thiamine-pyrophosphate (TPP), the active form of vitamin B1.</text>
</comment>
<comment type="catalytic activity">
    <reaction evidence="1">
        <text>thiamine phosphate + ATP = thiamine diphosphate + ADP</text>
        <dbReference type="Rhea" id="RHEA:15913"/>
        <dbReference type="ChEBI" id="CHEBI:30616"/>
        <dbReference type="ChEBI" id="CHEBI:37575"/>
        <dbReference type="ChEBI" id="CHEBI:58937"/>
        <dbReference type="ChEBI" id="CHEBI:456216"/>
        <dbReference type="EC" id="2.7.4.16"/>
    </reaction>
</comment>
<comment type="pathway">
    <text evidence="1">Cofactor biosynthesis; thiamine diphosphate biosynthesis; thiamine diphosphate from thiamine phosphate: step 1/1.</text>
</comment>
<comment type="miscellaneous">
    <text evidence="1">Reaction mechanism of ThiL seems to utilize a direct, inline transfer of the gamma-phosphate of ATP to TMP rather than a phosphorylated enzyme intermediate.</text>
</comment>
<comment type="similarity">
    <text evidence="1">Belongs to the thiamine-monophosphate kinase family.</text>
</comment>
<comment type="sequence caution" evidence="2">
    <conflict type="erroneous initiation">
        <sequence resource="EMBL-CDS" id="CAF20021"/>
    </conflict>
    <text>Truncated N-terminus.</text>
</comment>
<gene>
    <name evidence="1" type="primary">thiL</name>
    <name type="ordered locus">Cgl1323</name>
    <name type="ordered locus">cg1495</name>
</gene>
<feature type="chain" id="PRO_0000415636" description="Thiamine-monophosphate kinase">
    <location>
        <begin position="1"/>
        <end position="331"/>
    </location>
</feature>
<feature type="binding site" evidence="1">
    <location>
        <position position="43"/>
    </location>
    <ligand>
        <name>Mg(2+)</name>
        <dbReference type="ChEBI" id="CHEBI:18420"/>
        <label>3</label>
    </ligand>
</feature>
<feature type="binding site" evidence="1">
    <location>
        <position position="43"/>
    </location>
    <ligand>
        <name>Mg(2+)</name>
        <dbReference type="ChEBI" id="CHEBI:18420"/>
        <label>4</label>
    </ligand>
</feature>
<feature type="binding site" evidence="1">
    <location>
        <position position="59"/>
    </location>
    <ligand>
        <name>Mg(2+)</name>
        <dbReference type="ChEBI" id="CHEBI:18420"/>
        <label>4</label>
    </ligand>
</feature>
<feature type="binding site" evidence="1">
    <location>
        <position position="60"/>
    </location>
    <ligand>
        <name>Mg(2+)</name>
        <dbReference type="ChEBI" id="CHEBI:18420"/>
        <label>1</label>
    </ligand>
</feature>
<feature type="binding site" evidence="1">
    <location>
        <position position="61"/>
    </location>
    <ligand>
        <name>Mg(2+)</name>
        <dbReference type="ChEBI" id="CHEBI:18420"/>
        <label>1</label>
    </ligand>
</feature>
<feature type="binding site" evidence="1">
    <location>
        <position position="61"/>
    </location>
    <ligand>
        <name>Mg(2+)</name>
        <dbReference type="ChEBI" id="CHEBI:18420"/>
        <label>2</label>
    </ligand>
</feature>
<feature type="binding site" evidence="1">
    <location>
        <position position="68"/>
    </location>
    <ligand>
        <name>substrate</name>
    </ligand>
</feature>
<feature type="binding site" evidence="1">
    <location>
        <position position="90"/>
    </location>
    <ligand>
        <name>Mg(2+)</name>
        <dbReference type="ChEBI" id="CHEBI:18420"/>
        <label>2</label>
    </ligand>
</feature>
<feature type="binding site" evidence="1">
    <location>
        <position position="90"/>
    </location>
    <ligand>
        <name>Mg(2+)</name>
        <dbReference type="ChEBI" id="CHEBI:18420"/>
        <label>3</label>
    </ligand>
</feature>
<feature type="binding site" evidence="1">
    <location>
        <position position="90"/>
    </location>
    <ligand>
        <name>Mg(2+)</name>
        <dbReference type="ChEBI" id="CHEBI:18420"/>
        <label>4</label>
    </ligand>
</feature>
<feature type="binding site" evidence="1">
    <location>
        <begin position="137"/>
        <end position="138"/>
    </location>
    <ligand>
        <name>ATP</name>
        <dbReference type="ChEBI" id="CHEBI:30616"/>
    </ligand>
</feature>
<feature type="binding site" evidence="1">
    <location>
        <position position="138"/>
    </location>
    <ligand>
        <name>Mg(2+)</name>
        <dbReference type="ChEBI" id="CHEBI:18420"/>
        <label>1</label>
    </ligand>
</feature>
<feature type="binding site" evidence="1">
    <location>
        <position position="231"/>
    </location>
    <ligand>
        <name>Mg(2+)</name>
        <dbReference type="ChEBI" id="CHEBI:18420"/>
        <label>3</label>
    </ligand>
</feature>
<feature type="binding site" evidence="1">
    <location>
        <position position="233"/>
    </location>
    <ligand>
        <name>ATP</name>
        <dbReference type="ChEBI" id="CHEBI:30616"/>
    </ligand>
</feature>
<feature type="binding site" evidence="1">
    <location>
        <position position="234"/>
    </location>
    <ligand>
        <name>Mg(2+)</name>
        <dbReference type="ChEBI" id="CHEBI:18420"/>
        <label>5</label>
    </ligand>
</feature>
<feature type="binding site" evidence="1">
    <location>
        <position position="284"/>
    </location>
    <ligand>
        <name>substrate</name>
    </ligand>
</feature>
<feature type="binding site" evidence="1">
    <location>
        <position position="328"/>
    </location>
    <ligand>
        <name>substrate</name>
    </ligand>
</feature>
<sequence length="331" mass="34849">MTLAHSLSFPDSLRDGPTVGDLGEFEVIRVITEQAGSSLNGDDAAVLRHASPNSRAVVTTDMLVAGRHFQLDWSTPEQIGQKAIVQNFADIEAMGARPVAALLAISAPTHTPVEFVRGLARGMNQRLEEYSAELVGGDITSGDSLVIAVTAIGQLGGSLPELTLGRARPGQTLVAHGKIGYSAAGLALLQHFGPDNVPEHLRPLVDAHCAPVLTPGRGMVARAAGATAMTDNSDGLIVDLNQMAMKSGVRIDVDSSSISPDELLSEAASVLGTDAWRWILSGGEDHTLLSTTFGDAPSGFRTIGQVTKTRHEDLVTVDKKTPAFSDGWRSF</sequence>
<proteinExistence type="inferred from homology"/>
<accession>Q8NQV0</accession>
<accession>Q6M5N4</accession>
<organism>
    <name type="scientific">Corynebacterium glutamicum (strain ATCC 13032 / DSM 20300 / JCM 1318 / BCRC 11384 / CCUG 27702 / LMG 3730 / NBRC 12168 / NCIMB 10025 / NRRL B-2784 / 534)</name>
    <dbReference type="NCBI Taxonomy" id="196627"/>
    <lineage>
        <taxon>Bacteria</taxon>
        <taxon>Bacillati</taxon>
        <taxon>Actinomycetota</taxon>
        <taxon>Actinomycetes</taxon>
        <taxon>Mycobacteriales</taxon>
        <taxon>Corynebacteriaceae</taxon>
        <taxon>Corynebacterium</taxon>
    </lineage>
</organism>
<reference key="1">
    <citation type="journal article" date="2003" name="Appl. Microbiol. Biotechnol.">
        <title>The Corynebacterium glutamicum genome: features and impacts on biotechnological processes.</title>
        <authorList>
            <person name="Ikeda M."/>
            <person name="Nakagawa S."/>
        </authorList>
    </citation>
    <scope>NUCLEOTIDE SEQUENCE [LARGE SCALE GENOMIC DNA]</scope>
    <source>
        <strain>ATCC 13032 / DSM 20300 / JCM 1318 / BCRC 11384 / CCUG 27702 / LMG 3730 / NBRC 12168 / NCIMB 10025 / NRRL B-2784 / 534</strain>
    </source>
</reference>
<reference key="2">
    <citation type="journal article" date="2003" name="J. Biotechnol.">
        <title>The complete Corynebacterium glutamicum ATCC 13032 genome sequence and its impact on the production of L-aspartate-derived amino acids and vitamins.</title>
        <authorList>
            <person name="Kalinowski J."/>
            <person name="Bathe B."/>
            <person name="Bartels D."/>
            <person name="Bischoff N."/>
            <person name="Bott M."/>
            <person name="Burkovski A."/>
            <person name="Dusch N."/>
            <person name="Eggeling L."/>
            <person name="Eikmanns B.J."/>
            <person name="Gaigalat L."/>
            <person name="Goesmann A."/>
            <person name="Hartmann M."/>
            <person name="Huthmacher K."/>
            <person name="Kraemer R."/>
            <person name="Linke B."/>
            <person name="McHardy A.C."/>
            <person name="Meyer F."/>
            <person name="Moeckel B."/>
            <person name="Pfefferle W."/>
            <person name="Puehler A."/>
            <person name="Rey D.A."/>
            <person name="Rueckert C."/>
            <person name="Rupp O."/>
            <person name="Sahm H."/>
            <person name="Wendisch V.F."/>
            <person name="Wiegraebe I."/>
            <person name="Tauch A."/>
        </authorList>
    </citation>
    <scope>NUCLEOTIDE SEQUENCE [LARGE SCALE GENOMIC DNA]</scope>
    <source>
        <strain>ATCC 13032 / DSM 20300 / JCM 1318 / BCRC 11384 / CCUG 27702 / LMG 3730 / NBRC 12168 / NCIMB 10025 / NRRL B-2784 / 534</strain>
    </source>
</reference>
<keyword id="KW-0067">ATP-binding</keyword>
<keyword id="KW-0418">Kinase</keyword>
<keyword id="KW-0460">Magnesium</keyword>
<keyword id="KW-0479">Metal-binding</keyword>
<keyword id="KW-0547">Nucleotide-binding</keyword>
<keyword id="KW-1185">Reference proteome</keyword>
<keyword id="KW-0784">Thiamine biosynthesis</keyword>
<keyword id="KW-0808">Transferase</keyword>